<dbReference type="EC" id="1.14.14.9" evidence="2"/>
<dbReference type="EMBL" id="AY566612">
    <property type="protein sequence ID" value="AAS75429.1"/>
    <property type="molecule type" value="Genomic_DNA"/>
</dbReference>
<dbReference type="PDB" id="2JBR">
    <property type="method" value="X-ray"/>
    <property type="resolution" value="2.30 A"/>
    <property type="chains" value="A/B/C/D=1-422"/>
</dbReference>
<dbReference type="PDB" id="2JBS">
    <property type="method" value="X-ray"/>
    <property type="resolution" value="2.80 A"/>
    <property type="chains" value="A/B/C/D=1-422"/>
</dbReference>
<dbReference type="PDB" id="2JBT">
    <property type="method" value="X-ray"/>
    <property type="resolution" value="2.80 A"/>
    <property type="chains" value="A/B/C/D=1-422"/>
</dbReference>
<dbReference type="PDBsum" id="2JBR"/>
<dbReference type="PDBsum" id="2JBS"/>
<dbReference type="PDBsum" id="2JBT"/>
<dbReference type="SMR" id="Q6Q272"/>
<dbReference type="DIP" id="DIP-60804N"/>
<dbReference type="PATRIC" id="fig|470.1293.peg.2565"/>
<dbReference type="eggNOG" id="COG1960">
    <property type="taxonomic scope" value="Bacteria"/>
</dbReference>
<dbReference type="BRENDA" id="1.14.14.9">
    <property type="organism ID" value="98"/>
</dbReference>
<dbReference type="SABIO-RK" id="Q6Q272"/>
<dbReference type="UniPathway" id="UPA00208">
    <property type="reaction ID" value="UER00416"/>
</dbReference>
<dbReference type="EvolutionaryTrace" id="Q6Q272"/>
<dbReference type="GO" id="GO:0005737">
    <property type="term" value="C:cytoplasm"/>
    <property type="evidence" value="ECO:0007669"/>
    <property type="project" value="TreeGrafter"/>
</dbReference>
<dbReference type="GO" id="GO:0052881">
    <property type="term" value="F:4-hydroxyphenylacetate 3-monooxygenase activity"/>
    <property type="evidence" value="ECO:0007669"/>
    <property type="project" value="UniProtKB-EC"/>
</dbReference>
<dbReference type="GO" id="GO:0003995">
    <property type="term" value="F:acyl-CoA dehydrogenase activity"/>
    <property type="evidence" value="ECO:0007669"/>
    <property type="project" value="TreeGrafter"/>
</dbReference>
<dbReference type="GO" id="GO:0050660">
    <property type="term" value="F:flavin adenine dinucleotide binding"/>
    <property type="evidence" value="ECO:0007669"/>
    <property type="project" value="InterPro"/>
</dbReference>
<dbReference type="GO" id="GO:0033539">
    <property type="term" value="P:fatty acid beta-oxidation using acyl-CoA dehydrogenase"/>
    <property type="evidence" value="ECO:0007669"/>
    <property type="project" value="TreeGrafter"/>
</dbReference>
<dbReference type="CDD" id="cd01159">
    <property type="entry name" value="NcnH"/>
    <property type="match status" value="1"/>
</dbReference>
<dbReference type="Gene3D" id="1.10.540.10">
    <property type="entry name" value="Acyl-CoA dehydrogenase/oxidase, N-terminal domain"/>
    <property type="match status" value="1"/>
</dbReference>
<dbReference type="Gene3D" id="2.40.110.10">
    <property type="entry name" value="Butyryl-CoA Dehydrogenase, subunit A, domain 2"/>
    <property type="match status" value="1"/>
</dbReference>
<dbReference type="Gene3D" id="1.20.140.10">
    <property type="entry name" value="Butyryl-CoA Dehydrogenase, subunit A, domain 3"/>
    <property type="match status" value="1"/>
</dbReference>
<dbReference type="InterPro" id="IPR050741">
    <property type="entry name" value="Acyl-CoA_dehydrogenase"/>
</dbReference>
<dbReference type="InterPro" id="IPR013107">
    <property type="entry name" value="Acyl-CoA_DH_C"/>
</dbReference>
<dbReference type="InterPro" id="IPR046373">
    <property type="entry name" value="Acyl-CoA_Oxase/DH_mid-dom_sf"/>
</dbReference>
<dbReference type="InterPro" id="IPR036250">
    <property type="entry name" value="AcylCo_DH-like_C"/>
</dbReference>
<dbReference type="InterPro" id="IPR013786">
    <property type="entry name" value="AcylCoA_DH/ox_N"/>
</dbReference>
<dbReference type="InterPro" id="IPR037069">
    <property type="entry name" value="AcylCoA_DH/ox_N_sf"/>
</dbReference>
<dbReference type="InterPro" id="IPR009100">
    <property type="entry name" value="AcylCoA_DH/oxidase_NM_dom_sf"/>
</dbReference>
<dbReference type="NCBIfam" id="NF045920">
    <property type="entry name" value="HphnlacHdxOX"/>
    <property type="match status" value="1"/>
</dbReference>
<dbReference type="PANTHER" id="PTHR48083:SF19">
    <property type="entry name" value="FLAVIN-DEPENDENT MONOOXYGENASE, OXYGENASE SUBUNIT HSAA"/>
    <property type="match status" value="1"/>
</dbReference>
<dbReference type="PANTHER" id="PTHR48083">
    <property type="entry name" value="MEDIUM-CHAIN SPECIFIC ACYL-COA DEHYDROGENASE, MITOCHONDRIAL-RELATED"/>
    <property type="match status" value="1"/>
</dbReference>
<dbReference type="Pfam" id="PF08028">
    <property type="entry name" value="Acyl-CoA_dh_2"/>
    <property type="match status" value="1"/>
</dbReference>
<dbReference type="Pfam" id="PF02771">
    <property type="entry name" value="Acyl-CoA_dh_N"/>
    <property type="match status" value="1"/>
</dbReference>
<dbReference type="PIRSF" id="PIRSF016578">
    <property type="entry name" value="HsaA"/>
    <property type="match status" value="1"/>
</dbReference>
<dbReference type="SUPFAM" id="SSF47203">
    <property type="entry name" value="Acyl-CoA dehydrogenase C-terminal domain-like"/>
    <property type="match status" value="1"/>
</dbReference>
<dbReference type="SUPFAM" id="SSF56645">
    <property type="entry name" value="Acyl-CoA dehydrogenase NM domain-like"/>
    <property type="match status" value="1"/>
</dbReference>
<feature type="chain" id="PRO_0000415755" description="p-hydroxyphenylacetate 3-hydroxylase, oxygenase component">
    <location>
        <begin position="1"/>
        <end position="422"/>
    </location>
</feature>
<feature type="binding site" evidence="6">
    <location>
        <position position="112"/>
    </location>
    <ligand>
        <name>FMN</name>
        <dbReference type="ChEBI" id="CHEBI:58210"/>
    </ligand>
</feature>
<feature type="binding site">
    <location>
        <position position="120"/>
    </location>
    <ligand>
        <name>substrate</name>
    </ligand>
</feature>
<feature type="binding site" evidence="6">
    <location>
        <begin position="146"/>
        <end position="148"/>
    </location>
    <ligand>
        <name>FMN</name>
        <dbReference type="ChEBI" id="CHEBI:58210"/>
    </ligand>
</feature>
<feature type="binding site">
    <location>
        <position position="146"/>
    </location>
    <ligand>
        <name>substrate</name>
    </ligand>
</feature>
<feature type="binding site" evidence="6">
    <location>
        <begin position="169"/>
        <end position="171"/>
    </location>
    <ligand>
        <name>FMN</name>
        <dbReference type="ChEBI" id="CHEBI:58210"/>
    </ligand>
</feature>
<feature type="binding site">
    <location>
        <begin position="263"/>
        <end position="266"/>
    </location>
    <ligand>
        <name>substrate</name>
    </ligand>
</feature>
<feature type="binding site" evidence="6">
    <location>
        <position position="292"/>
    </location>
    <ligand>
        <name>FMN</name>
        <dbReference type="ChEBI" id="CHEBI:58210"/>
    </ligand>
</feature>
<feature type="binding site" evidence="6">
    <location>
        <position position="296"/>
    </location>
    <ligand>
        <name>FMN</name>
        <dbReference type="ChEBI" id="CHEBI:58210"/>
    </ligand>
</feature>
<feature type="binding site">
    <location>
        <position position="296"/>
    </location>
    <ligand>
        <name>substrate</name>
    </ligand>
</feature>
<feature type="binding site" evidence="6">
    <location>
        <begin position="374"/>
        <end position="375"/>
    </location>
    <ligand>
        <name>FMN</name>
        <dbReference type="ChEBI" id="CHEBI:58210"/>
    </ligand>
</feature>
<feature type="binding site" evidence="6">
    <location>
        <begin position="396"/>
        <end position="397"/>
    </location>
    <ligand>
        <name>FMN</name>
        <dbReference type="ChEBI" id="CHEBI:58210"/>
    </ligand>
</feature>
<feature type="mutagenesis site" description="Loss of hydroxylation activity. 7 to 10-fold higher rate constant for hydrogen peroxide elimination." evidence="10">
    <original>H</original>
    <variation>D</variation>
    <variation>N</variation>
    <location>
        <position position="120"/>
    </location>
</feature>
<feature type="mutagenesis site" description="170-fold higher rate constant for hydrogen peroxide elimination." evidence="10">
    <original>H</original>
    <variation>K</variation>
    <location>
        <position position="120"/>
    </location>
</feature>
<feature type="mutagenesis site" description="Decrease in rate constant for hydroxylation by 6-fold." evidence="10">
    <original>S</original>
    <variation>A</variation>
    <location>
        <position position="146"/>
    </location>
</feature>
<feature type="mutagenesis site" description="Decrease in rate constant for hydroxylation by 45-fold and decreased enzymatic efficiency at pH greater than 9." evidence="10">
    <original>S</original>
    <variation>C</variation>
    <location>
        <position position="146"/>
    </location>
</feature>
<feature type="mutagenesis site" description="Failure to form reaction intermediate; when associated with V-396. Decrease in rate constant for the formation of intermediate by 11-fold. Increase in rate constant for hydrogen peroxide elimination by 1400-fold." evidence="9">
    <original>S</original>
    <variation>A</variation>
    <location>
        <position position="171"/>
    </location>
</feature>
<feature type="mutagenesis site" description="Increase in rate constant for hydrogen peroxide elimination by 8-fold." evidence="9">
    <original>S</original>
    <variation>T</variation>
    <location>
        <position position="171"/>
    </location>
</feature>
<feature type="mutagenesis site" description="Decrease in rate constant for the formation of the reaction intermediate by 100-fold. Denatured above pH 10." evidence="9">
    <original>H</original>
    <variation>A</variation>
    <location>
        <position position="396"/>
    </location>
</feature>
<feature type="mutagenesis site" description="Reduced binding with flavin. Lower rate constant. Denatured above pH 10." evidence="9">
    <original>H</original>
    <variation>K</variation>
    <location>
        <position position="396"/>
    </location>
</feature>
<feature type="mutagenesis site" description="Decrease in rate constant for the formation of the reaction intermediate by 30-fold. Denatured above pH 10." evidence="9">
    <original>H</original>
    <variation>N</variation>
    <location>
        <position position="396"/>
    </location>
</feature>
<feature type="mutagenesis site" description="Reduced binding with flavin. Lower rate constant. Denatured above pH 10." evidence="9">
    <original>H</original>
    <variation>R</variation>
    <location>
        <position position="396"/>
    </location>
</feature>
<feature type="mutagenesis site" description="Failure to form reaction intermediate; when associated with A-171. Decrease in rate constant for the formation of the reaction intermediate by 300-fold. Denatured above pH 10." evidence="9">
    <original>H</original>
    <variation>V</variation>
    <location>
        <position position="396"/>
    </location>
</feature>
<feature type="strand" evidence="14">
    <location>
        <begin position="27"/>
        <end position="29"/>
    </location>
</feature>
<feature type="helix" evidence="14">
    <location>
        <begin position="40"/>
        <end position="53"/>
    </location>
</feature>
<feature type="helix" evidence="14">
    <location>
        <begin position="55"/>
        <end position="61"/>
    </location>
</feature>
<feature type="helix" evidence="14">
    <location>
        <begin position="66"/>
        <end position="74"/>
    </location>
</feature>
<feature type="helix" evidence="14">
    <location>
        <begin position="77"/>
        <end position="79"/>
    </location>
</feature>
<feature type="strand" evidence="14">
    <location>
        <begin position="80"/>
        <end position="82"/>
    </location>
</feature>
<feature type="helix" evidence="14">
    <location>
        <begin position="84"/>
        <end position="86"/>
    </location>
</feature>
<feature type="helix" evidence="14">
    <location>
        <begin position="93"/>
        <end position="106"/>
    </location>
</feature>
<feature type="helix" evidence="14">
    <location>
        <begin position="108"/>
        <end position="124"/>
    </location>
</feature>
<feature type="helix" evidence="14">
    <location>
        <begin position="129"/>
        <end position="136"/>
    </location>
</feature>
<feature type="strand" evidence="14">
    <location>
        <begin position="144"/>
        <end position="147"/>
    </location>
</feature>
<feature type="strand" evidence="14">
    <location>
        <begin position="152"/>
        <end position="157"/>
    </location>
</feature>
<feature type="strand" evidence="14">
    <location>
        <begin position="160"/>
        <end position="170"/>
    </location>
</feature>
<feature type="helix" evidence="14">
    <location>
        <begin position="173"/>
        <end position="175"/>
    </location>
</feature>
<feature type="strand" evidence="14">
    <location>
        <begin position="177"/>
        <end position="186"/>
    </location>
</feature>
<feature type="strand" evidence="14">
    <location>
        <begin position="192"/>
        <end position="200"/>
    </location>
</feature>
<feature type="helix" evidence="14">
    <location>
        <begin position="201"/>
        <end position="203"/>
    </location>
</feature>
<feature type="strand" evidence="14">
    <location>
        <begin position="205"/>
        <end position="207"/>
    </location>
</feature>
<feature type="strand" evidence="14">
    <location>
        <begin position="212"/>
        <end position="215"/>
    </location>
</feature>
<feature type="helix" evidence="14">
    <location>
        <begin position="216"/>
        <end position="218"/>
    </location>
</feature>
<feature type="strand" evidence="14">
    <location>
        <begin position="221"/>
        <end position="231"/>
    </location>
</feature>
<feature type="helix" evidence="14">
    <location>
        <begin position="232"/>
        <end position="234"/>
    </location>
</feature>
<feature type="strand" evidence="14">
    <location>
        <begin position="235"/>
        <end position="237"/>
    </location>
</feature>
<feature type="helix" evidence="14">
    <location>
        <begin position="238"/>
        <end position="242"/>
    </location>
</feature>
<feature type="turn" evidence="14">
    <location>
        <begin position="247"/>
        <end position="250"/>
    </location>
</feature>
<feature type="strand" evidence="14">
    <location>
        <begin position="256"/>
        <end position="260"/>
    </location>
</feature>
<feature type="helix" evidence="14">
    <location>
        <begin position="262"/>
        <end position="266"/>
    </location>
</feature>
<feature type="helix" evidence="14">
    <location>
        <begin position="269"/>
        <end position="289"/>
    </location>
</feature>
<feature type="turn" evidence="14">
    <location>
        <begin position="295"/>
        <end position="297"/>
    </location>
</feature>
<feature type="helix" evidence="14">
    <location>
        <begin position="305"/>
        <end position="337"/>
    </location>
</feature>
<feature type="helix" evidence="14">
    <location>
        <begin position="344"/>
        <end position="369"/>
    </location>
</feature>
<feature type="helix" evidence="14">
    <location>
        <begin position="374"/>
        <end position="377"/>
    </location>
</feature>
<feature type="helix" evidence="14">
    <location>
        <begin position="382"/>
        <end position="393"/>
    </location>
</feature>
<feature type="turn" evidence="14">
    <location>
        <begin position="397"/>
        <end position="399"/>
    </location>
</feature>
<feature type="helix" evidence="14">
    <location>
        <begin position="401"/>
        <end position="412"/>
    </location>
</feature>
<name>HPAH_ACIBA</name>
<gene>
    <name evidence="12" type="primary">C2-hpah</name>
</gene>
<proteinExistence type="evidence at protein level"/>
<comment type="function">
    <text evidence="2 3 4 5 7 8">Oxygenase component of a two-component system that utilizes reduced FMN (FMNH2) supplied by the reductase component to catalyze the hydroxylation of 4-hydroxyphenylacetic acid, leading to the production of 3,4-dihydroxyphenylacetate (3,4-DHPA). Also utilizes other reduced flavins such as FADH2 and reduced riboflavin to a lesser extent. Only the compounds with a hydroxyl group in the para (p-) position can be hydroxylated. May also oxidize phenol to catechol, and hydroxylate other phenol derivatives.</text>
</comment>
<comment type="catalytic activity">
    <reaction evidence="2 3 5">
        <text>4-hydroxyphenylacetate + FMNH2 + O2 = 3,4-dihydroxyphenylacetate + FMN + H2O + H(+)</text>
        <dbReference type="Rhea" id="RHEA:59880"/>
        <dbReference type="ChEBI" id="CHEBI:15377"/>
        <dbReference type="ChEBI" id="CHEBI:15378"/>
        <dbReference type="ChEBI" id="CHEBI:15379"/>
        <dbReference type="ChEBI" id="CHEBI:17612"/>
        <dbReference type="ChEBI" id="CHEBI:48999"/>
        <dbReference type="ChEBI" id="CHEBI:57618"/>
        <dbReference type="ChEBI" id="CHEBI:58210"/>
    </reaction>
</comment>
<comment type="catalytic activity">
    <reaction evidence="2 3 5">
        <text>4-hydroxyphenylacetate + FADH2 + O2 = 3,4-dihydroxyphenylacetate + FAD + H2O + H(+)</text>
        <dbReference type="Rhea" id="RHEA:30595"/>
        <dbReference type="ChEBI" id="CHEBI:15377"/>
        <dbReference type="ChEBI" id="CHEBI:15378"/>
        <dbReference type="ChEBI" id="CHEBI:15379"/>
        <dbReference type="ChEBI" id="CHEBI:17612"/>
        <dbReference type="ChEBI" id="CHEBI:48999"/>
        <dbReference type="ChEBI" id="CHEBI:57692"/>
        <dbReference type="ChEBI" id="CHEBI:58307"/>
        <dbReference type="EC" id="1.14.14.9"/>
    </reaction>
</comment>
<comment type="activity regulation">
    <text evidence="2 4 7">Inhibited by flavin concentrations greater than 15 uM. Also inhibited by excess p-hydroxyphenylacetate (HPA).</text>
</comment>
<comment type="biophysicochemical properties">
    <kinetics>
        <KM evidence="2">19 uM for 4-hydroxyphenylacetate (with FMN as cosubstrate)</KM>
        <KM evidence="2">14 uM for 4-hydroxyphenylacetate (with FAD as cosubstrate)</KM>
        <KM evidence="3">25 uM for 4-hydroxyphenylacetate (with FMN as cosubstrate)</KM>
        <KM evidence="3">15 uM for 4-hydroxyphenylacetate (with FAD as cosubstrate)</KM>
        <text>Km values measured using the C1-C2 complex.</text>
    </kinetics>
    <phDependence>
        <text evidence="8">Optimum pH is 6-10.</text>
    </phDependence>
</comment>
<comment type="pathway">
    <text evidence="2">Aromatic compound metabolism; 4-hydroxyphenylacetate degradation; pyruvate and succinate semialdehyde from 4-hydroxyphenylacetate: step 1/7.</text>
</comment>
<comment type="subunit">
    <text evidence="2 6">Homotetramer. The p-hydroxyphenylacetate 3-hydroxylase (HpaH) is composed of an oxygenase component C2 and a reductase component C1.</text>
</comment>
<comment type="similarity">
    <text evidence="11">Belongs to the HpaH/HsaA monooxygenase family.</text>
</comment>
<reference evidence="11 12" key="1">
    <citation type="journal article" date="2004" name="Biochim. Biophys. Acta">
        <title>Cloning and expression of p-hydroxyphenylacetate 3-hydroxylase from Acinetobacter baumannii: evidence of the divergence of enzymes in the class of two-protein component aromatic hydroxylases.</title>
        <authorList>
            <person name="Thotsaporn K."/>
            <person name="Sucharitakul J."/>
            <person name="Wongratana J."/>
            <person name="Suadee C."/>
            <person name="Chaiyen P."/>
        </authorList>
    </citation>
    <scope>NUCLEOTIDE SEQUENCE [GENOMIC DNA]</scope>
    <scope>PROTEIN SEQUENCE OF 1-35</scope>
    <scope>FUNCTION</scope>
    <scope>CATALYTIC ACTIVITY</scope>
    <scope>KINETIC PARAMETERS</scope>
</reference>
<reference evidence="11" key="2">
    <citation type="journal article" date="2001" name="Eur. J. Biochem.">
        <title>A novel two-protein component flavoprotein hydroxylase.</title>
        <authorList>
            <person name="Chaiyen P."/>
            <person name="Suadee C."/>
            <person name="Wilairat P."/>
        </authorList>
    </citation>
    <scope>FUNCTION</scope>
    <scope>CATALYTIC ACTIVITY</scope>
    <scope>ACTIVITY REGULATION</scope>
    <scope>KINETIC PARAMETERS</scope>
    <scope>PATHWAY</scope>
    <scope>SUBUNIT</scope>
</reference>
<reference evidence="11" key="3">
    <citation type="journal article" date="2005" name="Biochemistry">
        <title>The reductase of p-hydroxyphenylacetate 3-hydroxylase from Acinetobacter baumannii requires p-hydroxyphenylacetate for effective catalysis.</title>
        <authorList>
            <person name="Sucharitakul J."/>
            <person name="Chaiyen P."/>
            <person name="Entsch B."/>
            <person name="Ballou D.P."/>
        </authorList>
    </citation>
    <scope>FUNCTION</scope>
    <scope>ACTIVITY REGULATION</scope>
</reference>
<reference evidence="11" key="4">
    <citation type="journal article" date="2006" name="J. Biol. Chem.">
        <title>Kinetic mechanisms of the oxygenase from a two-component enzyme, p-hydroxyphenylacetate 3-hydroxylase from Acinetobacter baumannii.</title>
        <authorList>
            <person name="Sucharitakul J."/>
            <person name="Chaiyen P."/>
            <person name="Entsch B."/>
            <person name="Ballou D.P."/>
        </authorList>
    </citation>
    <scope>FUNCTION</scope>
    <scope>CATALYTIC ACTIVITY</scope>
</reference>
<reference evidence="11" key="5">
    <citation type="journal article" date="2007" name="Biochemistry">
        <title>Kinetics of a two-component p-hydroxyphenylacetate hydroxylase explain how reduced flavin is transferred from the reductase to the oxygenase.</title>
        <authorList>
            <person name="Sucharitakul J."/>
            <person name="Phongsak T."/>
            <person name="Entsch B."/>
            <person name="Svasti J."/>
            <person name="Chaiyen P."/>
            <person name="Ballou D.P."/>
        </authorList>
    </citation>
    <scope>FUNCTION</scope>
    <scope>ACTIVITY REGULATION</scope>
</reference>
<reference evidence="11" key="6">
    <citation type="journal article" date="2011" name="J. Biol. Chem.">
        <title>pH-dependent studies reveal an efficient hydroxylation mechanism of the oxygenase component of p-hydroxyphenylacetate 3-hydroxylase.</title>
        <authorList>
            <person name="Ruangchan N."/>
            <person name="Tongsook C."/>
            <person name="Sucharitakul J."/>
            <person name="Chaiyen P."/>
        </authorList>
    </citation>
    <scope>FUNCTION</scope>
    <scope>PH DEPENDENCE</scope>
</reference>
<reference evidence="11" key="7">
    <citation type="journal article" date="2011" name="J. Biol. Chem.">
        <title>Stabilization of C4a-hydroperoxyflavin in a two-component flavin-dependent monooxygenase is achieved through interactions at flavin N5 and C4a atoms.</title>
        <authorList>
            <person name="Thotsaporn K."/>
            <person name="Chenprakhon P."/>
            <person name="Sucharitakul J."/>
            <person name="Mattevi A."/>
            <person name="Chaiyen P."/>
        </authorList>
    </citation>
    <scope>MUTAGENESIS OF SER-171 AND HIS-396</scope>
</reference>
<reference evidence="11" key="8">
    <citation type="journal article" date="2011" name="J. Biol. Chem.">
        <title>Interactions with the substrate phenolic group are essential for hydroxylation by the oxygenase component of p-hydroxyphenylacetate 3-hydroxylase.</title>
        <authorList>
            <person name="Tongsook C."/>
            <person name="Sucharitakul J."/>
            <person name="Thotsaporn K."/>
            <person name="Chaiyen P."/>
        </authorList>
    </citation>
    <scope>MUTAGENESIS OF HIS-120 AND SER-146</scope>
</reference>
<reference evidence="11 13" key="9">
    <citation type="journal article" date="2007" name="Proc. Natl. Acad. Sci. U.S.A.">
        <title>Structure of the monooxygenase component of a two-component flavoprotein monooxygenase.</title>
        <authorList>
            <person name="Alfieri A."/>
            <person name="Fersini F."/>
            <person name="Ruangchan N."/>
            <person name="Prongjit M."/>
            <person name="Chaiyen P."/>
            <person name="Mattevi A."/>
        </authorList>
    </citation>
    <scope>X-RAY CRYSTALLOGRAPHY (2.30 ANGSTROMS) OF APOENZYME AND IN COMPLEXES WITH REDUCED FMN AND 4-HYDROXYPHENYLACETATE</scope>
    <scope>SUBUNIT</scope>
</reference>
<accession>Q6Q272</accession>
<protein>
    <recommendedName>
        <fullName>p-hydroxyphenylacetate 3-hydroxylase, oxygenase component</fullName>
        <ecNumber evidence="2">1.14.14.9</ecNumber>
    </recommendedName>
    <alternativeName>
        <fullName evidence="1">4-HPA 3-hydroxylase</fullName>
    </alternativeName>
    <alternativeName>
        <fullName evidence="1">4-HPA 3-monooxygenase large component</fullName>
    </alternativeName>
    <alternativeName>
        <fullName>p-hydroxyphenylacetate 3-hydroxylase C2 component</fullName>
    </alternativeName>
</protein>
<keyword id="KW-0002">3D-structure</keyword>
<keyword id="KW-0058">Aromatic hydrocarbons catabolism</keyword>
<keyword id="KW-0903">Direct protein sequencing</keyword>
<keyword id="KW-0274">FAD</keyword>
<keyword id="KW-0285">Flavoprotein</keyword>
<keyword id="KW-0288">FMN</keyword>
<keyword id="KW-0503">Monooxygenase</keyword>
<keyword id="KW-0547">Nucleotide-binding</keyword>
<keyword id="KW-0560">Oxidoreductase</keyword>
<evidence type="ECO:0000250" key="1">
    <source>
        <dbReference type="UniProtKB" id="Q57160"/>
    </source>
</evidence>
<evidence type="ECO:0000269" key="2">
    <source>
    </source>
</evidence>
<evidence type="ECO:0000269" key="3">
    <source>
    </source>
</evidence>
<evidence type="ECO:0000269" key="4">
    <source>
    </source>
</evidence>
<evidence type="ECO:0000269" key="5">
    <source>
    </source>
</evidence>
<evidence type="ECO:0000269" key="6">
    <source>
    </source>
</evidence>
<evidence type="ECO:0000269" key="7">
    <source>
    </source>
</evidence>
<evidence type="ECO:0000269" key="8">
    <source>
    </source>
</evidence>
<evidence type="ECO:0000269" key="9">
    <source>
    </source>
</evidence>
<evidence type="ECO:0000269" key="10">
    <source>
    </source>
</evidence>
<evidence type="ECO:0000305" key="11"/>
<evidence type="ECO:0000312" key="12">
    <source>
        <dbReference type="EMBL" id="AAS75429.1"/>
    </source>
</evidence>
<evidence type="ECO:0000312" key="13">
    <source>
        <dbReference type="PDB" id="2JBS"/>
    </source>
</evidence>
<evidence type="ECO:0007829" key="14">
    <source>
        <dbReference type="PDB" id="2JBR"/>
    </source>
</evidence>
<organism>
    <name type="scientific">Acinetobacter baumannii</name>
    <dbReference type="NCBI Taxonomy" id="470"/>
    <lineage>
        <taxon>Bacteria</taxon>
        <taxon>Pseudomonadati</taxon>
        <taxon>Pseudomonadota</taxon>
        <taxon>Gammaproteobacteria</taxon>
        <taxon>Moraxellales</taxon>
        <taxon>Moraxellaceae</taxon>
        <taxon>Acinetobacter</taxon>
        <taxon>Acinetobacter calcoaceticus/baumannii complex</taxon>
    </lineage>
</organism>
<sequence>MENTVLNLDSDVIHACEAIFQPIRLVYTHAQTPDVSGVSMLEKIQQILPQIAKNAESAEQLRRVPDENIKLLKEIGLHRAFQPKVYGGLEMSLPDFANCIVTLAGACAGTAWAFSLLCTHSHQIAMFSKQLQDEIWLKDPDATASSSIAPFGKVEEVEGGIILNGDYGWSSGCDHAEYAIVGFNRFDADGNKIYSFGVIPRSDYEIVDNWYAQAIKSSGSKMLKLVNVFIPEYRISKAKDMMEGKSAGFGLYPDSKIFYTPYRPYFASGFSAVSLGIAERMIEAFKEKQRNRVRAYTGANVGLATPALMRIAESTHQVAAARALLEKTWEDHRIHGLNHQYPNKETLAFWRTNQAYAVKMCIEAVDRLMAAAGATSFMDNSELQRLFRDAHMTGAHAYTDYDVCAQILGRELMGMEPDPTMV</sequence>